<reference key="1">
    <citation type="journal article" date="1996" name="Plant Mol. Biol.">
        <title>Identification and isoprenylation of plant GTP-binding proteins.</title>
        <authorList>
            <person name="Biermann B.J."/>
            <person name="Randall S.K."/>
            <person name="Crowell D.N."/>
        </authorList>
    </citation>
    <scope>NUCLEOTIDE SEQUENCE [MRNA]</scope>
    <scope>ISOPRENYLATION</scope>
</reference>
<reference key="2">
    <citation type="journal article" date="2000" name="Nature">
        <title>Sequence and analysis of chromosome 3 of the plant Arabidopsis thaliana.</title>
        <authorList>
            <person name="Salanoubat M."/>
            <person name="Lemcke K."/>
            <person name="Rieger M."/>
            <person name="Ansorge W."/>
            <person name="Unseld M."/>
            <person name="Fartmann B."/>
            <person name="Valle G."/>
            <person name="Bloecker H."/>
            <person name="Perez-Alonso M."/>
            <person name="Obermaier B."/>
            <person name="Delseny M."/>
            <person name="Boutry M."/>
            <person name="Grivell L.A."/>
            <person name="Mache R."/>
            <person name="Puigdomenech P."/>
            <person name="De Simone V."/>
            <person name="Choisne N."/>
            <person name="Artiguenave F."/>
            <person name="Robert C."/>
            <person name="Brottier P."/>
            <person name="Wincker P."/>
            <person name="Cattolico L."/>
            <person name="Weissenbach J."/>
            <person name="Saurin W."/>
            <person name="Quetier F."/>
            <person name="Schaefer M."/>
            <person name="Mueller-Auer S."/>
            <person name="Gabel C."/>
            <person name="Fuchs M."/>
            <person name="Benes V."/>
            <person name="Wurmbach E."/>
            <person name="Drzonek H."/>
            <person name="Erfle H."/>
            <person name="Jordan N."/>
            <person name="Bangert S."/>
            <person name="Wiedelmann R."/>
            <person name="Kranz H."/>
            <person name="Voss H."/>
            <person name="Holland R."/>
            <person name="Brandt P."/>
            <person name="Nyakatura G."/>
            <person name="Vezzi A."/>
            <person name="D'Angelo M."/>
            <person name="Pallavicini A."/>
            <person name="Toppo S."/>
            <person name="Simionati B."/>
            <person name="Conrad A."/>
            <person name="Hornischer K."/>
            <person name="Kauer G."/>
            <person name="Loehnert T.-H."/>
            <person name="Nordsiek G."/>
            <person name="Reichelt J."/>
            <person name="Scharfe M."/>
            <person name="Schoen O."/>
            <person name="Bargues M."/>
            <person name="Terol J."/>
            <person name="Climent J."/>
            <person name="Navarro P."/>
            <person name="Collado C."/>
            <person name="Perez-Perez A."/>
            <person name="Ottenwaelder B."/>
            <person name="Duchemin D."/>
            <person name="Cooke R."/>
            <person name="Laudie M."/>
            <person name="Berger-Llauro C."/>
            <person name="Purnelle B."/>
            <person name="Masuy D."/>
            <person name="de Haan M."/>
            <person name="Maarse A.C."/>
            <person name="Alcaraz J.-P."/>
            <person name="Cottet A."/>
            <person name="Casacuberta E."/>
            <person name="Monfort A."/>
            <person name="Argiriou A."/>
            <person name="Flores M."/>
            <person name="Liguori R."/>
            <person name="Vitale D."/>
            <person name="Mannhaupt G."/>
            <person name="Haase D."/>
            <person name="Schoof H."/>
            <person name="Rudd S."/>
            <person name="Zaccaria P."/>
            <person name="Mewes H.-W."/>
            <person name="Mayer K.F.X."/>
            <person name="Kaul S."/>
            <person name="Town C.D."/>
            <person name="Koo H.L."/>
            <person name="Tallon L.J."/>
            <person name="Jenkins J."/>
            <person name="Rooney T."/>
            <person name="Rizzo M."/>
            <person name="Walts A."/>
            <person name="Utterback T."/>
            <person name="Fujii C.Y."/>
            <person name="Shea T.P."/>
            <person name="Creasy T.H."/>
            <person name="Haas B."/>
            <person name="Maiti R."/>
            <person name="Wu D."/>
            <person name="Peterson J."/>
            <person name="Van Aken S."/>
            <person name="Pai G."/>
            <person name="Militscher J."/>
            <person name="Sellers P."/>
            <person name="Gill J.E."/>
            <person name="Feldblyum T.V."/>
            <person name="Preuss D."/>
            <person name="Lin X."/>
            <person name="Nierman W.C."/>
            <person name="Salzberg S.L."/>
            <person name="White O."/>
            <person name="Venter J.C."/>
            <person name="Fraser C.M."/>
            <person name="Kaneko T."/>
            <person name="Nakamura Y."/>
            <person name="Sato S."/>
            <person name="Kato T."/>
            <person name="Asamizu E."/>
            <person name="Sasamoto S."/>
            <person name="Kimura T."/>
            <person name="Idesawa K."/>
            <person name="Kawashima K."/>
            <person name="Kishida Y."/>
            <person name="Kiyokawa C."/>
            <person name="Kohara M."/>
            <person name="Matsumoto M."/>
            <person name="Matsuno A."/>
            <person name="Muraki A."/>
            <person name="Nakayama S."/>
            <person name="Nakazaki N."/>
            <person name="Shinpo S."/>
            <person name="Takeuchi C."/>
            <person name="Wada T."/>
            <person name="Watanabe A."/>
            <person name="Yamada M."/>
            <person name="Yasuda M."/>
            <person name="Tabata S."/>
        </authorList>
    </citation>
    <scope>NUCLEOTIDE SEQUENCE [LARGE SCALE GENOMIC DNA]</scope>
    <source>
        <strain>cv. Columbia</strain>
    </source>
</reference>
<reference key="3">
    <citation type="journal article" date="2017" name="Plant J.">
        <title>Araport11: a complete reannotation of the Arabidopsis thaliana reference genome.</title>
        <authorList>
            <person name="Cheng C.Y."/>
            <person name="Krishnakumar V."/>
            <person name="Chan A.P."/>
            <person name="Thibaud-Nissen F."/>
            <person name="Schobel S."/>
            <person name="Town C.D."/>
        </authorList>
    </citation>
    <scope>GENOME REANNOTATION</scope>
    <source>
        <strain>cv. Columbia</strain>
    </source>
</reference>
<reference key="4">
    <citation type="journal article" date="2002" name="Science">
        <title>Functional annotation of a full-length Arabidopsis cDNA collection.</title>
        <authorList>
            <person name="Seki M."/>
            <person name="Narusaka M."/>
            <person name="Kamiya A."/>
            <person name="Ishida J."/>
            <person name="Satou M."/>
            <person name="Sakurai T."/>
            <person name="Nakajima M."/>
            <person name="Enju A."/>
            <person name="Akiyama K."/>
            <person name="Oono Y."/>
            <person name="Muramatsu M."/>
            <person name="Hayashizaki Y."/>
            <person name="Kawai J."/>
            <person name="Carninci P."/>
            <person name="Itoh M."/>
            <person name="Ishii Y."/>
            <person name="Arakawa T."/>
            <person name="Shibata K."/>
            <person name="Shinagawa A."/>
            <person name="Shinozaki K."/>
        </authorList>
    </citation>
    <scope>NUCLEOTIDE SEQUENCE [LARGE SCALE MRNA]</scope>
    <source>
        <strain>cv. Columbia</strain>
    </source>
</reference>
<reference key="5">
    <citation type="journal article" date="2003" name="Science">
        <title>Empirical analysis of transcriptional activity in the Arabidopsis genome.</title>
        <authorList>
            <person name="Yamada K."/>
            <person name="Lim J."/>
            <person name="Dale J.M."/>
            <person name="Chen H."/>
            <person name="Shinn P."/>
            <person name="Palm C.J."/>
            <person name="Southwick A.M."/>
            <person name="Wu H.C."/>
            <person name="Kim C.J."/>
            <person name="Nguyen M."/>
            <person name="Pham P.K."/>
            <person name="Cheuk R.F."/>
            <person name="Karlin-Newmann G."/>
            <person name="Liu S.X."/>
            <person name="Lam B."/>
            <person name="Sakano H."/>
            <person name="Wu T."/>
            <person name="Yu G."/>
            <person name="Miranda M."/>
            <person name="Quach H.L."/>
            <person name="Tripp M."/>
            <person name="Chang C.H."/>
            <person name="Lee J.M."/>
            <person name="Toriumi M.J."/>
            <person name="Chan M.M."/>
            <person name="Tang C.C."/>
            <person name="Onodera C.S."/>
            <person name="Deng J.M."/>
            <person name="Akiyama K."/>
            <person name="Ansari Y."/>
            <person name="Arakawa T."/>
            <person name="Banh J."/>
            <person name="Banno F."/>
            <person name="Bowser L."/>
            <person name="Brooks S.Y."/>
            <person name="Carninci P."/>
            <person name="Chao Q."/>
            <person name="Choy N."/>
            <person name="Enju A."/>
            <person name="Goldsmith A.D."/>
            <person name="Gurjal M."/>
            <person name="Hansen N.F."/>
            <person name="Hayashizaki Y."/>
            <person name="Johnson-Hopson C."/>
            <person name="Hsuan V.W."/>
            <person name="Iida K."/>
            <person name="Karnes M."/>
            <person name="Khan S."/>
            <person name="Koesema E."/>
            <person name="Ishida J."/>
            <person name="Jiang P.X."/>
            <person name="Jones T."/>
            <person name="Kawai J."/>
            <person name="Kamiya A."/>
            <person name="Meyers C."/>
            <person name="Nakajima M."/>
            <person name="Narusaka M."/>
            <person name="Seki M."/>
            <person name="Sakurai T."/>
            <person name="Satou M."/>
            <person name="Tamse R."/>
            <person name="Vaysberg M."/>
            <person name="Wallender E.K."/>
            <person name="Wong C."/>
            <person name="Yamamura Y."/>
            <person name="Yuan S."/>
            <person name="Shinozaki K."/>
            <person name="Davis R.W."/>
            <person name="Theologis A."/>
            <person name="Ecker J.R."/>
        </authorList>
    </citation>
    <scope>NUCLEOTIDE SEQUENCE [LARGE SCALE MRNA]</scope>
    <source>
        <strain>cv. Columbia</strain>
    </source>
</reference>
<reference key="6">
    <citation type="journal article" date="2003" name="Plant Physiol.">
        <title>Analysis of the small GTPase gene superfamily of Arabidopsis.</title>
        <authorList>
            <person name="Vernoud V."/>
            <person name="Horton A.C."/>
            <person name="Yang Z."/>
            <person name="Nielsen E."/>
        </authorList>
    </citation>
    <scope>GENE FAMILY</scope>
    <scope>NOMENCLATURE</scope>
</reference>
<reference key="7">
    <citation type="journal article" date="2007" name="J. Exp. Bot.">
        <title>Localization and domain characterization of Arabidopsis golgin candidates.</title>
        <authorList>
            <person name="Latijnhouwers M."/>
            <person name="Gillespie T."/>
            <person name="Boevink P."/>
            <person name="Kriechbaumer V."/>
            <person name="Hawes C."/>
            <person name="Carvalho C.M."/>
        </authorList>
    </citation>
    <scope>INTERACTION WITH GC5</scope>
</reference>
<reference key="8">
    <citation type="journal article" date="2008" name="J. Exp. Bot.">
        <title>An isoform of Arabidopsis myosin XI interacts with small GTPases in its C-terminal tail region.</title>
        <authorList>
            <person name="Hashimoto K."/>
            <person name="Igarashi H."/>
            <person name="Mano S."/>
            <person name="Takenaka C."/>
            <person name="Shiina T."/>
            <person name="Yamaguchi M."/>
            <person name="Demura T."/>
            <person name="Nishimura M."/>
            <person name="Shimmen T."/>
            <person name="Yokota E."/>
        </authorList>
    </citation>
    <scope>INTERACTION WITH XI-2/MYA2</scope>
</reference>
<reference key="9">
    <citation type="journal article" date="2009" name="J. Cell Sci.">
        <title>Genetic evidence that the higher plant Rab-D1 and Rab-D2 GTPases exhibit distinct but overlapping interactions in the early secretory pathway.</title>
        <authorList>
            <person name="Pinheiro H."/>
            <person name="Samalova M."/>
            <person name="Geldner N."/>
            <person name="Chory J."/>
            <person name="Martinez A."/>
            <person name="Moore I."/>
        </authorList>
    </citation>
    <scope>SUBCELLULAR LOCATION</scope>
    <scope>MUTAGENESIS OF SER-22; GLN-67 AND ASN-121</scope>
</reference>
<reference key="10">
    <citation type="journal article" date="2012" name="Mol. Cell. Proteomics">
        <title>Comparative large-scale characterisation of plant vs. mammal proteins reveals similar and idiosyncratic N-alpha acetylation features.</title>
        <authorList>
            <person name="Bienvenut W.V."/>
            <person name="Sumpton D."/>
            <person name="Martinez A."/>
            <person name="Lilla S."/>
            <person name="Espagne C."/>
            <person name="Meinnel T."/>
            <person name="Giglione C."/>
        </authorList>
    </citation>
    <scope>ACETYLATION [LARGE SCALE ANALYSIS] AT SER-2</scope>
    <scope>CLEAVAGE OF INITIATOR METHIONINE [LARGE SCALE ANALYSIS]</scope>
    <scope>IDENTIFICATION BY MASS SPECTROMETRY [LARGE SCALE ANALYSIS]</scope>
</reference>
<dbReference type="EMBL" id="U64911">
    <property type="protein sequence ID" value="AAD00111.1"/>
    <property type="molecule type" value="mRNA"/>
</dbReference>
<dbReference type="EMBL" id="AC016795">
    <property type="protein sequence ID" value="AAF23189.1"/>
    <property type="molecule type" value="Genomic_DNA"/>
</dbReference>
<dbReference type="EMBL" id="CP002686">
    <property type="protein sequence ID" value="AEE75090.1"/>
    <property type="molecule type" value="Genomic_DNA"/>
</dbReference>
<dbReference type="EMBL" id="AK118150">
    <property type="protein sequence ID" value="BAC42775.1"/>
    <property type="molecule type" value="mRNA"/>
</dbReference>
<dbReference type="EMBL" id="BT005576">
    <property type="protein sequence ID" value="AAO63996.1"/>
    <property type="molecule type" value="mRNA"/>
</dbReference>
<dbReference type="RefSeq" id="NP_187779.1">
    <property type="nucleotide sequence ID" value="NM_112005.4"/>
</dbReference>
<dbReference type="SMR" id="Q9ZRE2"/>
<dbReference type="BioGRID" id="5679">
    <property type="interactions" value="10"/>
</dbReference>
<dbReference type="FunCoup" id="Q9ZRE2">
    <property type="interactions" value="2290"/>
</dbReference>
<dbReference type="IntAct" id="Q9ZRE2">
    <property type="interactions" value="10"/>
</dbReference>
<dbReference type="STRING" id="3702.Q9ZRE2"/>
<dbReference type="iPTMnet" id="Q9ZRE2"/>
<dbReference type="SwissPalm" id="Q9ZRE2"/>
<dbReference type="PaxDb" id="3702-AT3G11730.1"/>
<dbReference type="ProteomicsDB" id="236556"/>
<dbReference type="EnsemblPlants" id="AT3G11730.1">
    <property type="protein sequence ID" value="AT3G11730.1"/>
    <property type="gene ID" value="AT3G11730"/>
</dbReference>
<dbReference type="GeneID" id="820345"/>
<dbReference type="Gramene" id="AT3G11730.1">
    <property type="protein sequence ID" value="AT3G11730.1"/>
    <property type="gene ID" value="AT3G11730"/>
</dbReference>
<dbReference type="KEGG" id="ath:AT3G11730"/>
<dbReference type="Araport" id="AT3G11730"/>
<dbReference type="TAIR" id="AT3G11730">
    <property type="gene designation" value="ATFP8"/>
</dbReference>
<dbReference type="eggNOG" id="KOG0084">
    <property type="taxonomic scope" value="Eukaryota"/>
</dbReference>
<dbReference type="HOGENOM" id="CLU_041217_10_1_1"/>
<dbReference type="InParanoid" id="Q9ZRE2"/>
<dbReference type="OMA" id="IQQKNNC"/>
<dbReference type="OrthoDB" id="9989112at2759"/>
<dbReference type="PhylomeDB" id="Q9ZRE2"/>
<dbReference type="PRO" id="PR:Q9ZRE2"/>
<dbReference type="Proteomes" id="UP000006548">
    <property type="component" value="Chromosome 3"/>
</dbReference>
<dbReference type="ExpressionAtlas" id="Q9ZRE2">
    <property type="expression patterns" value="baseline and differential"/>
</dbReference>
<dbReference type="GO" id="GO:0000139">
    <property type="term" value="C:Golgi membrane"/>
    <property type="evidence" value="ECO:0000314"/>
    <property type="project" value="UniProtKB"/>
</dbReference>
<dbReference type="GO" id="GO:0005886">
    <property type="term" value="C:plasma membrane"/>
    <property type="evidence" value="ECO:0007005"/>
    <property type="project" value="TAIR"/>
</dbReference>
<dbReference type="GO" id="GO:0032588">
    <property type="term" value="C:trans-Golgi network membrane"/>
    <property type="evidence" value="ECO:0000314"/>
    <property type="project" value="UniProtKB"/>
</dbReference>
<dbReference type="GO" id="GO:0005525">
    <property type="term" value="F:GTP binding"/>
    <property type="evidence" value="ECO:0007669"/>
    <property type="project" value="UniProtKB-KW"/>
</dbReference>
<dbReference type="GO" id="GO:0030742">
    <property type="term" value="F:GTP-dependent protein binding"/>
    <property type="evidence" value="ECO:0000353"/>
    <property type="project" value="TAIR"/>
</dbReference>
<dbReference type="GO" id="GO:0003924">
    <property type="term" value="F:GTPase activity"/>
    <property type="evidence" value="ECO:0007669"/>
    <property type="project" value="InterPro"/>
</dbReference>
<dbReference type="GO" id="GO:0080115">
    <property type="term" value="F:myosin XI tail binding"/>
    <property type="evidence" value="ECO:0000353"/>
    <property type="project" value="TAIR"/>
</dbReference>
<dbReference type="GO" id="GO:0006888">
    <property type="term" value="P:endoplasmic reticulum to Golgi vesicle-mediated transport"/>
    <property type="evidence" value="ECO:0000315"/>
    <property type="project" value="UniProtKB"/>
</dbReference>
<dbReference type="GO" id="GO:0015031">
    <property type="term" value="P:protein transport"/>
    <property type="evidence" value="ECO:0007669"/>
    <property type="project" value="UniProtKB-KW"/>
</dbReference>
<dbReference type="CDD" id="cd01869">
    <property type="entry name" value="Rab1_Ypt1"/>
    <property type="match status" value="1"/>
</dbReference>
<dbReference type="FunFam" id="3.40.50.300:FF:000069">
    <property type="entry name" value="Ras GTP-binding protein YPT1"/>
    <property type="match status" value="1"/>
</dbReference>
<dbReference type="Gene3D" id="3.40.50.300">
    <property type="entry name" value="P-loop containing nucleotide triphosphate hydrolases"/>
    <property type="match status" value="1"/>
</dbReference>
<dbReference type="InterPro" id="IPR027417">
    <property type="entry name" value="P-loop_NTPase"/>
</dbReference>
<dbReference type="InterPro" id="IPR005225">
    <property type="entry name" value="Small_GTP-bd"/>
</dbReference>
<dbReference type="InterPro" id="IPR001806">
    <property type="entry name" value="Small_GTPase"/>
</dbReference>
<dbReference type="InterPro" id="IPR050305">
    <property type="entry name" value="Small_GTPase_Rab"/>
</dbReference>
<dbReference type="NCBIfam" id="TIGR00231">
    <property type="entry name" value="small_GTP"/>
    <property type="match status" value="1"/>
</dbReference>
<dbReference type="PANTHER" id="PTHR47980">
    <property type="entry name" value="LD44762P"/>
    <property type="match status" value="1"/>
</dbReference>
<dbReference type="Pfam" id="PF00071">
    <property type="entry name" value="Ras"/>
    <property type="match status" value="1"/>
</dbReference>
<dbReference type="PRINTS" id="PR00449">
    <property type="entry name" value="RASTRNSFRMNG"/>
</dbReference>
<dbReference type="SMART" id="SM00177">
    <property type="entry name" value="ARF"/>
    <property type="match status" value="1"/>
</dbReference>
<dbReference type="SMART" id="SM00175">
    <property type="entry name" value="RAB"/>
    <property type="match status" value="1"/>
</dbReference>
<dbReference type="SMART" id="SM00176">
    <property type="entry name" value="RAN"/>
    <property type="match status" value="1"/>
</dbReference>
<dbReference type="SMART" id="SM00173">
    <property type="entry name" value="RAS"/>
    <property type="match status" value="1"/>
</dbReference>
<dbReference type="SMART" id="SM00174">
    <property type="entry name" value="RHO"/>
    <property type="match status" value="1"/>
</dbReference>
<dbReference type="SUPFAM" id="SSF52540">
    <property type="entry name" value="P-loop containing nucleoside triphosphate hydrolases"/>
    <property type="match status" value="1"/>
</dbReference>
<dbReference type="PROSITE" id="PS51419">
    <property type="entry name" value="RAB"/>
    <property type="match status" value="1"/>
</dbReference>
<comment type="function">
    <text>Protein transport. Regulator of membrane traffic from the Golgi apparatus towards the endoplasmic reticulum (ER).</text>
</comment>
<comment type="subunit">
    <text evidence="4 5">Does not interact with GC5. Interacts with XI-2/MYA2.</text>
</comment>
<comment type="interaction">
    <interactant intactId="EBI-2009542">
        <id>Q9ZRE2</id>
    </interactant>
    <interactant intactId="EBI-2009528">
        <id>Q9LKB9</id>
        <label>XI-2</label>
    </interactant>
    <organismsDiffer>false</organismsDiffer>
    <experiments>3</experiments>
</comment>
<comment type="subcellular location">
    <subcellularLocation>
        <location evidence="6">Golgi apparatus</location>
        <location evidence="6">trans-Golgi network membrane</location>
    </subcellularLocation>
    <subcellularLocation>
        <location evidence="8">Golgi apparatus membrane</location>
        <topology evidence="8">Lipid-anchor</topology>
    </subcellularLocation>
</comment>
<comment type="similarity">
    <text evidence="7">Belongs to the small GTPase superfamily. Rab family.</text>
</comment>
<organism>
    <name type="scientific">Arabidopsis thaliana</name>
    <name type="common">Mouse-ear cress</name>
    <dbReference type="NCBI Taxonomy" id="3702"/>
    <lineage>
        <taxon>Eukaryota</taxon>
        <taxon>Viridiplantae</taxon>
        <taxon>Streptophyta</taxon>
        <taxon>Embryophyta</taxon>
        <taxon>Tracheophyta</taxon>
        <taxon>Spermatophyta</taxon>
        <taxon>Magnoliopsida</taxon>
        <taxon>eudicotyledons</taxon>
        <taxon>Gunneridae</taxon>
        <taxon>Pentapetalae</taxon>
        <taxon>rosids</taxon>
        <taxon>malvids</taxon>
        <taxon>Brassicales</taxon>
        <taxon>Brassicaceae</taxon>
        <taxon>Camelineae</taxon>
        <taxon>Arabidopsis</taxon>
    </lineage>
</organism>
<evidence type="ECO:0000250" key="1"/>
<evidence type="ECO:0000250" key="2">
    <source>
        <dbReference type="UniProtKB" id="P62820"/>
    </source>
</evidence>
<evidence type="ECO:0000256" key="3">
    <source>
        <dbReference type="SAM" id="MobiDB-lite"/>
    </source>
</evidence>
<evidence type="ECO:0000269" key="4">
    <source>
    </source>
</evidence>
<evidence type="ECO:0000269" key="5">
    <source>
    </source>
</evidence>
<evidence type="ECO:0000269" key="6">
    <source>
    </source>
</evidence>
<evidence type="ECO:0000305" key="7"/>
<evidence type="ECO:0000305" key="8">
    <source>
    </source>
</evidence>
<evidence type="ECO:0007744" key="9">
    <source>
    </source>
</evidence>
<name>RABD1_ARATH</name>
<keyword id="KW-0007">Acetylation</keyword>
<keyword id="KW-0931">ER-Golgi transport</keyword>
<keyword id="KW-0333">Golgi apparatus</keyword>
<keyword id="KW-0342">GTP-binding</keyword>
<keyword id="KW-0449">Lipoprotein</keyword>
<keyword id="KW-0472">Membrane</keyword>
<keyword id="KW-0547">Nucleotide-binding</keyword>
<keyword id="KW-0636">Prenylation</keyword>
<keyword id="KW-0653">Protein transport</keyword>
<keyword id="KW-1185">Reference proteome</keyword>
<keyword id="KW-0813">Transport</keyword>
<gene>
    <name type="primary">RABD1</name>
    <name type="synonym">ATFP8</name>
    <name type="ordered locus">At3g11730</name>
    <name type="ORF">F26K24.2</name>
</gene>
<feature type="initiator methionine" description="Removed" evidence="9">
    <location>
        <position position="1"/>
    </location>
</feature>
<feature type="chain" id="PRO_0000348544" description="Ras-related protein RABD1">
    <location>
        <begin position="2"/>
        <end position="205"/>
    </location>
</feature>
<feature type="region of interest" description="Disordered" evidence="3">
    <location>
        <begin position="174"/>
        <end position="205"/>
    </location>
</feature>
<feature type="short sequence motif" description="Effector region" evidence="1">
    <location>
        <begin position="37"/>
        <end position="45"/>
    </location>
</feature>
<feature type="compositionally biased region" description="Polar residues" evidence="3">
    <location>
        <begin position="174"/>
        <end position="186"/>
    </location>
</feature>
<feature type="compositionally biased region" description="Polar residues" evidence="3">
    <location>
        <begin position="194"/>
        <end position="205"/>
    </location>
</feature>
<feature type="binding site" evidence="2">
    <location>
        <begin position="15"/>
        <end position="23"/>
    </location>
    <ligand>
        <name>GTP</name>
        <dbReference type="ChEBI" id="CHEBI:37565"/>
    </ligand>
</feature>
<feature type="binding site" evidence="2">
    <location>
        <begin position="33"/>
        <end position="40"/>
    </location>
    <ligand>
        <name>GTP</name>
        <dbReference type="ChEBI" id="CHEBI:37565"/>
    </ligand>
</feature>
<feature type="binding site" evidence="2">
    <location>
        <begin position="63"/>
        <end position="67"/>
    </location>
    <ligand>
        <name>GTP</name>
        <dbReference type="ChEBI" id="CHEBI:37565"/>
    </ligand>
</feature>
<feature type="binding site" evidence="2">
    <location>
        <begin position="121"/>
        <end position="124"/>
    </location>
    <ligand>
        <name>GTP</name>
        <dbReference type="ChEBI" id="CHEBI:37565"/>
    </ligand>
</feature>
<feature type="binding site" evidence="2">
    <location>
        <begin position="151"/>
        <end position="153"/>
    </location>
    <ligand>
        <name>GTP</name>
        <dbReference type="ChEBI" id="CHEBI:37565"/>
    </ligand>
</feature>
<feature type="modified residue" description="N-acetylserine" evidence="9">
    <location>
        <position position="2"/>
    </location>
</feature>
<feature type="lipid moiety-binding region" description="S-geranylgeranyl cysteine" evidence="1">
    <location>
        <position position="202"/>
    </location>
</feature>
<feature type="lipid moiety-binding region" description="S-geranylgeranyl cysteine" evidence="1">
    <location>
        <position position="203"/>
    </location>
</feature>
<feature type="mutagenesis site" description="Dominant negative (GDP-bound form); no effect on trafficking between the ER and Golgi." evidence="6">
    <original>S</original>
    <variation>N</variation>
    <location>
        <position position="22"/>
    </location>
</feature>
<feature type="mutagenesis site" description="No effect on trafficking between the ER and Golgi." evidence="6">
    <original>Q</original>
    <variation>L</variation>
    <location>
        <position position="67"/>
    </location>
</feature>
<feature type="mutagenesis site" description="Inhibits trafficking between the ER and Golgi. Causes severe dwarfism and seedlings death." evidence="6">
    <original>N</original>
    <variation>I</variation>
    <location>
        <position position="121"/>
    </location>
</feature>
<protein>
    <recommendedName>
        <fullName>Ras-related protein RABD1</fullName>
        <shortName>AtRABD1</shortName>
    </recommendedName>
    <alternativeName>
        <fullName>Ras-related protein ATFP8</fullName>
    </alternativeName>
</protein>
<proteinExistence type="evidence at protein level"/>
<accession>Q9ZRE2</accession>
<sequence length="205" mass="22725">MSNEYDYLFKLLLIGDSSVGKSCLLLRFADDAYIDSYISTIGVDFKIRTIEQDGKTIKLQIWDTAGQERFRTITSSYYRGAHGIIIVYDCTEMESFNNVKQWLSEIDRYANESVCKLLIGNKNDMVESKVVSTETGRALADELGIPFLETSAKDSINVEQAFLTIAGEIKKKMGSQTNANKTSGPGTVQMKGQPIQQNNGGCCGQ</sequence>